<keyword id="KW-0597">Phosphoprotein</keyword>
<keyword id="KW-1185">Reference proteome</keyword>
<feature type="chain" id="PRO_0000173492" description="Uncharacterized protein C4F10.09c">
    <location>
        <begin position="1"/>
        <end position="860"/>
    </location>
</feature>
<feature type="region of interest" description="Disordered" evidence="1">
    <location>
        <begin position="334"/>
        <end position="360"/>
    </location>
</feature>
<feature type="region of interest" description="Disordered" evidence="1">
    <location>
        <begin position="530"/>
        <end position="551"/>
    </location>
</feature>
<feature type="region of interest" description="Disordered" evidence="1">
    <location>
        <begin position="708"/>
        <end position="798"/>
    </location>
</feature>
<feature type="region of interest" description="Disordered" evidence="1">
    <location>
        <begin position="813"/>
        <end position="842"/>
    </location>
</feature>
<feature type="compositionally biased region" description="Basic and acidic residues" evidence="1">
    <location>
        <begin position="334"/>
        <end position="345"/>
    </location>
</feature>
<feature type="compositionally biased region" description="Basic and acidic residues" evidence="1">
    <location>
        <begin position="536"/>
        <end position="551"/>
    </location>
</feature>
<feature type="compositionally biased region" description="Acidic residues" evidence="1">
    <location>
        <begin position="716"/>
        <end position="725"/>
    </location>
</feature>
<feature type="compositionally biased region" description="Acidic residues" evidence="1">
    <location>
        <begin position="738"/>
        <end position="750"/>
    </location>
</feature>
<feature type="compositionally biased region" description="Acidic residues" evidence="1">
    <location>
        <begin position="813"/>
        <end position="824"/>
    </location>
</feature>
<feature type="modified residue" description="Phosphoserine" evidence="2">
    <location>
        <position position="744"/>
    </location>
</feature>
<feature type="modified residue" description="Phosphoserine" evidence="2">
    <location>
        <position position="748"/>
    </location>
</feature>
<proteinExistence type="evidence at protein level"/>
<dbReference type="EMBL" id="CU329670">
    <property type="protein sequence ID" value="CAB11712.1"/>
    <property type="molecule type" value="Genomic_DNA"/>
</dbReference>
<dbReference type="PIR" id="T38813">
    <property type="entry name" value="T38813"/>
</dbReference>
<dbReference type="SMR" id="O36021"/>
<dbReference type="BioGRID" id="280062">
    <property type="interactions" value="14"/>
</dbReference>
<dbReference type="FunCoup" id="O36021">
    <property type="interactions" value="783"/>
</dbReference>
<dbReference type="STRING" id="284812.O36021"/>
<dbReference type="iPTMnet" id="O36021"/>
<dbReference type="SwissPalm" id="O36021"/>
<dbReference type="PaxDb" id="4896-SPAC4F10.09c.1"/>
<dbReference type="EnsemblFungi" id="SPAC4F10.09c.1">
    <property type="protein sequence ID" value="SPAC4F10.09c.1:pep"/>
    <property type="gene ID" value="SPAC4F10.09c"/>
</dbReference>
<dbReference type="KEGG" id="spo:2543648"/>
<dbReference type="PomBase" id="SPAC4F10.09c"/>
<dbReference type="VEuPathDB" id="FungiDB:SPAC4F10.09c"/>
<dbReference type="eggNOG" id="KOG2038">
    <property type="taxonomic scope" value="Eukaryota"/>
</dbReference>
<dbReference type="HOGENOM" id="CLU_003417_0_0_1"/>
<dbReference type="InParanoid" id="O36021"/>
<dbReference type="OMA" id="EIWCNDE"/>
<dbReference type="PhylomeDB" id="O36021"/>
<dbReference type="PRO" id="PR:O36021"/>
<dbReference type="Proteomes" id="UP000002485">
    <property type="component" value="Chromosome I"/>
</dbReference>
<dbReference type="GO" id="GO:0030690">
    <property type="term" value="C:Noc1p-Noc2p complex"/>
    <property type="evidence" value="ECO:0000266"/>
    <property type="project" value="PomBase"/>
</dbReference>
<dbReference type="GO" id="GO:0005730">
    <property type="term" value="C:nucleolus"/>
    <property type="evidence" value="ECO:0007005"/>
    <property type="project" value="PomBase"/>
</dbReference>
<dbReference type="GO" id="GO:0005634">
    <property type="term" value="C:nucleus"/>
    <property type="evidence" value="ECO:0007005"/>
    <property type="project" value="PomBase"/>
</dbReference>
<dbReference type="GO" id="GO:0042254">
    <property type="term" value="P:ribosome biogenesis"/>
    <property type="evidence" value="ECO:0000266"/>
    <property type="project" value="PomBase"/>
</dbReference>
<dbReference type="InterPro" id="IPR016024">
    <property type="entry name" value="ARM-type_fold"/>
</dbReference>
<dbReference type="InterPro" id="IPR005612">
    <property type="entry name" value="CCAAT-binding_factor"/>
</dbReference>
<dbReference type="InterPro" id="IPR040155">
    <property type="entry name" value="CEBPZ/Mak21-like"/>
</dbReference>
<dbReference type="InterPro" id="IPR018247">
    <property type="entry name" value="EF_Hand_1_Ca_BS"/>
</dbReference>
<dbReference type="PANTHER" id="PTHR12048">
    <property type="entry name" value="CCAAT-BINDING FACTOR-RELATED"/>
    <property type="match status" value="1"/>
</dbReference>
<dbReference type="PANTHER" id="PTHR12048:SF0">
    <property type="entry name" value="CCAAT_ENHANCER-BINDING PROTEIN ZETA"/>
    <property type="match status" value="1"/>
</dbReference>
<dbReference type="Pfam" id="PF03914">
    <property type="entry name" value="CBF"/>
    <property type="match status" value="1"/>
</dbReference>
<dbReference type="SUPFAM" id="SSF48371">
    <property type="entry name" value="ARM repeat"/>
    <property type="match status" value="1"/>
</dbReference>
<gene>
    <name type="ORF">SPAC4F10.09c</name>
</gene>
<sequence length="860" mass="97993">MATLYPKPKRGQKIIFNEEGEGTIDTKPQGVMFDPGVPWYNIPLPELHEDKKFVNVDHVSELETRGLLLLKEDSERFSETLGHGTADKRMLQTLISSGTTSDRISALTLLVQESPIHAVKALETLLSICSKKSRNEATQAITTLKDLFIGGLLPDRKLKYMKQQSCLGSKNVTDKHLMVWAFESFLKSFYFKYIQIIEALSFDALLFVKSQMVSTIYDLLKAKPEQEQNLLKLLINKLGDKENKIASKASYSILQLEASHPAMKLVITKEIERFIFAPSTSRTSCYYTLITLNQTVLTHKQVDVANLLIEIYFVFFTKLLFALEKEEVADAPTLEKKSLQSDSKNKKSQKRKKDEDLRKEAEENVNSRVISAVLTGVNRAYPFAEVNSEKFDKHMNTLFAITHTASFNTSVQVLMLIFQASASRDFISDRYYKSLYESLLDPRLTTSSKQSLYLNLLYKSLIIDNNIPRVRAFIKRMVQVSAWQQPPLVTGLFHVMHQLVIATTALRSMFTNAEIHDFDGDEEEVFKDVEEDDVSEDQKVDSDKDGKLSDKQSHSAYVVGNVSVSTKKEHLSYDGRKRDPQYSNADGSCLWEIHPFLNHFHPTVSLLAKSLVYGEKILGKPNLSLHTLNHFLDKFAYRNPKKSAAARGHSIMQPLAGGLSKGYVPGSTYSGVPMNSEQFTSKKQEEIPVDELFFYRFFNDKYIKGKQARKTKVDRDEEGEIDEDEVWKALVDSKPQLEMDEEESDFDSEEMDKAMTDMGSDSEQSADENDNESMASEEKPMFSDEENLSEIAHSEDEFDDTVDFFEDENDLLPFNETDDEEEIQTVDHSETHSHKKKKRKAIKDLPVFADAESYAHLLEN</sequence>
<accession>O36021</accession>
<evidence type="ECO:0000256" key="1">
    <source>
        <dbReference type="SAM" id="MobiDB-lite"/>
    </source>
</evidence>
<evidence type="ECO:0000269" key="2">
    <source>
    </source>
</evidence>
<evidence type="ECO:0000305" key="3"/>
<comment type="similarity">
    <text evidence="3">Belongs to the CBF/MAK21 family.</text>
</comment>
<name>YEK9_SCHPO</name>
<reference key="1">
    <citation type="journal article" date="2002" name="Nature">
        <title>The genome sequence of Schizosaccharomyces pombe.</title>
        <authorList>
            <person name="Wood V."/>
            <person name="Gwilliam R."/>
            <person name="Rajandream M.A."/>
            <person name="Lyne M.H."/>
            <person name="Lyne R."/>
            <person name="Stewart A."/>
            <person name="Sgouros J.G."/>
            <person name="Peat N."/>
            <person name="Hayles J."/>
            <person name="Baker S.G."/>
            <person name="Basham D."/>
            <person name="Bowman S."/>
            <person name="Brooks K."/>
            <person name="Brown D."/>
            <person name="Brown S."/>
            <person name="Chillingworth T."/>
            <person name="Churcher C.M."/>
            <person name="Collins M."/>
            <person name="Connor R."/>
            <person name="Cronin A."/>
            <person name="Davis P."/>
            <person name="Feltwell T."/>
            <person name="Fraser A."/>
            <person name="Gentles S."/>
            <person name="Goble A."/>
            <person name="Hamlin N."/>
            <person name="Harris D.E."/>
            <person name="Hidalgo J."/>
            <person name="Hodgson G."/>
            <person name="Holroyd S."/>
            <person name="Hornsby T."/>
            <person name="Howarth S."/>
            <person name="Huckle E.J."/>
            <person name="Hunt S."/>
            <person name="Jagels K."/>
            <person name="James K.D."/>
            <person name="Jones L."/>
            <person name="Jones M."/>
            <person name="Leather S."/>
            <person name="McDonald S."/>
            <person name="McLean J."/>
            <person name="Mooney P."/>
            <person name="Moule S."/>
            <person name="Mungall K.L."/>
            <person name="Murphy L.D."/>
            <person name="Niblett D."/>
            <person name="Odell C."/>
            <person name="Oliver K."/>
            <person name="O'Neil S."/>
            <person name="Pearson D."/>
            <person name="Quail M.A."/>
            <person name="Rabbinowitsch E."/>
            <person name="Rutherford K.M."/>
            <person name="Rutter S."/>
            <person name="Saunders D."/>
            <person name="Seeger K."/>
            <person name="Sharp S."/>
            <person name="Skelton J."/>
            <person name="Simmonds M.N."/>
            <person name="Squares R."/>
            <person name="Squares S."/>
            <person name="Stevens K."/>
            <person name="Taylor K."/>
            <person name="Taylor R.G."/>
            <person name="Tivey A."/>
            <person name="Walsh S.V."/>
            <person name="Warren T."/>
            <person name="Whitehead S."/>
            <person name="Woodward J.R."/>
            <person name="Volckaert G."/>
            <person name="Aert R."/>
            <person name="Robben J."/>
            <person name="Grymonprez B."/>
            <person name="Weltjens I."/>
            <person name="Vanstreels E."/>
            <person name="Rieger M."/>
            <person name="Schaefer M."/>
            <person name="Mueller-Auer S."/>
            <person name="Gabel C."/>
            <person name="Fuchs M."/>
            <person name="Duesterhoeft A."/>
            <person name="Fritzc C."/>
            <person name="Holzer E."/>
            <person name="Moestl D."/>
            <person name="Hilbert H."/>
            <person name="Borzym K."/>
            <person name="Langer I."/>
            <person name="Beck A."/>
            <person name="Lehrach H."/>
            <person name="Reinhardt R."/>
            <person name="Pohl T.M."/>
            <person name="Eger P."/>
            <person name="Zimmermann W."/>
            <person name="Wedler H."/>
            <person name="Wambutt R."/>
            <person name="Purnelle B."/>
            <person name="Goffeau A."/>
            <person name="Cadieu E."/>
            <person name="Dreano S."/>
            <person name="Gloux S."/>
            <person name="Lelaure V."/>
            <person name="Mottier S."/>
            <person name="Galibert F."/>
            <person name="Aves S.J."/>
            <person name="Xiang Z."/>
            <person name="Hunt C."/>
            <person name="Moore K."/>
            <person name="Hurst S.M."/>
            <person name="Lucas M."/>
            <person name="Rochet M."/>
            <person name="Gaillardin C."/>
            <person name="Tallada V.A."/>
            <person name="Garzon A."/>
            <person name="Thode G."/>
            <person name="Daga R.R."/>
            <person name="Cruzado L."/>
            <person name="Jimenez J."/>
            <person name="Sanchez M."/>
            <person name="del Rey F."/>
            <person name="Benito J."/>
            <person name="Dominguez A."/>
            <person name="Revuelta J.L."/>
            <person name="Moreno S."/>
            <person name="Armstrong J."/>
            <person name="Forsburg S.L."/>
            <person name="Cerutti L."/>
            <person name="Lowe T."/>
            <person name="McCombie W.R."/>
            <person name="Paulsen I."/>
            <person name="Potashkin J."/>
            <person name="Shpakovski G.V."/>
            <person name="Ussery D."/>
            <person name="Barrell B.G."/>
            <person name="Nurse P."/>
        </authorList>
    </citation>
    <scope>NUCLEOTIDE SEQUENCE [LARGE SCALE GENOMIC DNA]</scope>
    <source>
        <strain>972 / ATCC 24843</strain>
    </source>
</reference>
<reference key="2">
    <citation type="journal article" date="2008" name="J. Proteome Res.">
        <title>Phosphoproteome analysis of fission yeast.</title>
        <authorList>
            <person name="Wilson-Grady J.T."/>
            <person name="Villen J."/>
            <person name="Gygi S.P."/>
        </authorList>
    </citation>
    <scope>PHOSPHORYLATION [LARGE SCALE ANALYSIS] AT SER-744 AND SER-748</scope>
    <scope>IDENTIFICATION BY MASS SPECTROMETRY</scope>
</reference>
<organism>
    <name type="scientific">Schizosaccharomyces pombe (strain 972 / ATCC 24843)</name>
    <name type="common">Fission yeast</name>
    <dbReference type="NCBI Taxonomy" id="284812"/>
    <lineage>
        <taxon>Eukaryota</taxon>
        <taxon>Fungi</taxon>
        <taxon>Dikarya</taxon>
        <taxon>Ascomycota</taxon>
        <taxon>Taphrinomycotina</taxon>
        <taxon>Schizosaccharomycetes</taxon>
        <taxon>Schizosaccharomycetales</taxon>
        <taxon>Schizosaccharomycetaceae</taxon>
        <taxon>Schizosaccharomyces</taxon>
    </lineage>
</organism>
<protein>
    <recommendedName>
        <fullName>Uncharacterized protein C4F10.09c</fullName>
    </recommendedName>
</protein>